<proteinExistence type="evidence at protein level"/>
<gene>
    <name evidence="9" type="primary">NUDT16L1</name>
    <name evidence="1" type="synonym">SDOS</name>
    <name evidence="7" type="synonym">TIRR</name>
</gene>
<dbReference type="EMBL" id="AK092642">
    <property type="protein sequence ID" value="BAC03933.1"/>
    <property type="molecule type" value="mRNA"/>
</dbReference>
<dbReference type="EMBL" id="BC006223">
    <property type="protein sequence ID" value="AAH06223.1"/>
    <property type="molecule type" value="mRNA"/>
</dbReference>
<dbReference type="CCDS" id="CCDS10519.1">
    <molecule id="Q9BRJ7-1"/>
</dbReference>
<dbReference type="RefSeq" id="NP_115725.1">
    <molecule id="Q9BRJ7-1"/>
    <property type="nucleotide sequence ID" value="NM_032349.4"/>
</dbReference>
<dbReference type="PDB" id="3KVH">
    <property type="method" value="X-ray"/>
    <property type="resolution" value="1.70 A"/>
    <property type="chains" value="A=6-211"/>
</dbReference>
<dbReference type="PDB" id="5ZCJ">
    <property type="method" value="X-ray"/>
    <property type="resolution" value="2.00 A"/>
    <property type="chains" value="A/B=6-211"/>
</dbReference>
<dbReference type="PDB" id="6CO1">
    <property type="method" value="X-ray"/>
    <property type="resolution" value="2.18 A"/>
    <property type="chains" value="A/B/C/D=6-211"/>
</dbReference>
<dbReference type="PDB" id="6D0L">
    <property type="method" value="X-ray"/>
    <property type="resolution" value="1.97 A"/>
    <property type="chains" value="A/B=6-211"/>
</dbReference>
<dbReference type="PDB" id="8U3S">
    <property type="method" value="X-ray"/>
    <property type="resolution" value="1.85 A"/>
    <property type="chains" value="A=6-211"/>
</dbReference>
<dbReference type="PDBsum" id="3KVH"/>
<dbReference type="PDBsum" id="5ZCJ"/>
<dbReference type="PDBsum" id="6CO1"/>
<dbReference type="PDBsum" id="6D0L"/>
<dbReference type="PDBsum" id="8U3S"/>
<dbReference type="SMR" id="Q9BRJ7"/>
<dbReference type="BioGRID" id="124035">
    <property type="interactions" value="119"/>
</dbReference>
<dbReference type="FunCoup" id="Q9BRJ7">
    <property type="interactions" value="1046"/>
</dbReference>
<dbReference type="IntAct" id="Q9BRJ7">
    <property type="interactions" value="42"/>
</dbReference>
<dbReference type="MINT" id="Q9BRJ7"/>
<dbReference type="STRING" id="9606.ENSP00000306670"/>
<dbReference type="MoonProt" id="Q9BRJ7"/>
<dbReference type="iPTMnet" id="Q9BRJ7"/>
<dbReference type="PhosphoSitePlus" id="Q9BRJ7"/>
<dbReference type="BioMuta" id="NUDT16L1"/>
<dbReference type="DMDM" id="68566060"/>
<dbReference type="jPOST" id="Q9BRJ7"/>
<dbReference type="MassIVE" id="Q9BRJ7"/>
<dbReference type="PaxDb" id="9606-ENSP00000306670"/>
<dbReference type="PeptideAtlas" id="Q9BRJ7"/>
<dbReference type="ProteomicsDB" id="78771">
    <molecule id="Q9BRJ7-1"/>
</dbReference>
<dbReference type="ProteomicsDB" id="78772">
    <molecule id="Q9BRJ7-2"/>
</dbReference>
<dbReference type="Pumba" id="Q9BRJ7"/>
<dbReference type="Antibodypedia" id="24391">
    <property type="antibodies" value="53 antibodies from 16 providers"/>
</dbReference>
<dbReference type="CPTC" id="Q9BRJ7">
    <property type="antibodies" value="1 antibody"/>
</dbReference>
<dbReference type="DNASU" id="84309"/>
<dbReference type="Ensembl" id="ENST00000304301.11">
    <molecule id="Q9BRJ7-1"/>
    <property type="protein sequence ID" value="ENSP00000306670.5"/>
    <property type="gene ID" value="ENSG00000168101.15"/>
</dbReference>
<dbReference type="Ensembl" id="ENST00000405142.1">
    <molecule id="Q9BRJ7-2"/>
    <property type="protein sequence ID" value="ENSP00000458144.1"/>
    <property type="gene ID" value="ENSG00000168101.15"/>
</dbReference>
<dbReference type="GeneID" id="84309"/>
<dbReference type="KEGG" id="hsa:84309"/>
<dbReference type="MANE-Select" id="ENST00000304301.11">
    <property type="protein sequence ID" value="ENSP00000306670.5"/>
    <property type="RefSeq nucleotide sequence ID" value="NM_032349.4"/>
    <property type="RefSeq protein sequence ID" value="NP_115725.1"/>
</dbReference>
<dbReference type="UCSC" id="uc002cxe.4">
    <molecule id="Q9BRJ7-1"/>
    <property type="organism name" value="human"/>
</dbReference>
<dbReference type="AGR" id="HGNC:28154"/>
<dbReference type="CTD" id="84309"/>
<dbReference type="GeneCards" id="NUDT16L1"/>
<dbReference type="HGNC" id="HGNC:28154">
    <property type="gene designation" value="NUDT16L1"/>
</dbReference>
<dbReference type="HPA" id="ENSG00000168101">
    <property type="expression patterns" value="Low tissue specificity"/>
</dbReference>
<dbReference type="MIM" id="617338">
    <property type="type" value="gene"/>
</dbReference>
<dbReference type="neXtProt" id="NX_Q9BRJ7"/>
<dbReference type="PharmGKB" id="PA134977238"/>
<dbReference type="VEuPathDB" id="HostDB:ENSG00000168101"/>
<dbReference type="eggNOG" id="ENOG502S20E">
    <property type="taxonomic scope" value="Eukaryota"/>
</dbReference>
<dbReference type="GeneTree" id="ENSGT00390000016224"/>
<dbReference type="HOGENOM" id="CLU_1212251_0_0_1"/>
<dbReference type="InParanoid" id="Q9BRJ7"/>
<dbReference type="OMA" id="PHREVAH"/>
<dbReference type="OrthoDB" id="5950381at2759"/>
<dbReference type="PAN-GO" id="Q9BRJ7">
    <property type="GO annotations" value="2 GO annotations based on evolutionary models"/>
</dbReference>
<dbReference type="PhylomeDB" id="Q9BRJ7"/>
<dbReference type="PathwayCommons" id="Q9BRJ7"/>
<dbReference type="SignaLink" id="Q9BRJ7"/>
<dbReference type="BioGRID-ORCS" id="84309">
    <property type="hits" value="66 hits in 1156 CRISPR screens"/>
</dbReference>
<dbReference type="CD-CODE" id="91857CE7">
    <property type="entry name" value="Nucleolus"/>
</dbReference>
<dbReference type="ChiTaRS" id="NUDT16L1">
    <property type="organism name" value="human"/>
</dbReference>
<dbReference type="EvolutionaryTrace" id="Q9BRJ7"/>
<dbReference type="GenomeRNAi" id="84309"/>
<dbReference type="Pharos" id="Q9BRJ7">
    <property type="development level" value="Tbio"/>
</dbReference>
<dbReference type="PRO" id="PR:Q9BRJ7"/>
<dbReference type="Proteomes" id="UP000005640">
    <property type="component" value="Chromosome 16"/>
</dbReference>
<dbReference type="RNAct" id="Q9BRJ7">
    <property type="molecule type" value="protein"/>
</dbReference>
<dbReference type="Bgee" id="ENSG00000168101">
    <property type="expression patterns" value="Expressed in mucosa of transverse colon and 100 other cell types or tissues"/>
</dbReference>
<dbReference type="ExpressionAtlas" id="Q9BRJ7">
    <property type="expression patterns" value="baseline and differential"/>
</dbReference>
<dbReference type="GO" id="GO:0005634">
    <property type="term" value="C:nucleus"/>
    <property type="evidence" value="ECO:0000314"/>
    <property type="project" value="UniProtKB"/>
</dbReference>
<dbReference type="GO" id="GO:0003723">
    <property type="term" value="F:RNA binding"/>
    <property type="evidence" value="ECO:0007005"/>
    <property type="project" value="UniProtKB"/>
</dbReference>
<dbReference type="GO" id="GO:0030515">
    <property type="term" value="F:snoRNA binding"/>
    <property type="evidence" value="ECO:0000314"/>
    <property type="project" value="UniProtKB"/>
</dbReference>
<dbReference type="GO" id="GO:2001033">
    <property type="term" value="P:negative regulation of double-strand break repair via nonhomologous end joining"/>
    <property type="evidence" value="ECO:0000314"/>
    <property type="project" value="UniProtKB"/>
</dbReference>
<dbReference type="CDD" id="cd18869">
    <property type="entry name" value="NUDIX_U8_SnoRNA_DE_Nudt16"/>
    <property type="match status" value="1"/>
</dbReference>
<dbReference type="FunFam" id="3.90.79.10:FF:000038">
    <property type="entry name" value="Tudor-interacting repair regulator protein"/>
    <property type="match status" value="1"/>
</dbReference>
<dbReference type="Gene3D" id="3.90.79.10">
    <property type="entry name" value="Nucleoside Triphosphate Pyrophosphohydrolase"/>
    <property type="match status" value="1"/>
</dbReference>
<dbReference type="InterPro" id="IPR015797">
    <property type="entry name" value="NUDIX_hydrolase-like_dom_sf"/>
</dbReference>
<dbReference type="InterPro" id="IPR054754">
    <property type="entry name" value="NudT16"/>
</dbReference>
<dbReference type="PANTHER" id="PTHR31699">
    <property type="entry name" value="NUDIX T16 FAMILY MEMBER"/>
    <property type="match status" value="1"/>
</dbReference>
<dbReference type="PANTHER" id="PTHR31699:SF6">
    <property type="entry name" value="TUDOR-INTERACTING REPAIR REGULATOR PROTEIN"/>
    <property type="match status" value="1"/>
</dbReference>
<dbReference type="Pfam" id="PF22327">
    <property type="entry name" value="Nudt16-like"/>
    <property type="match status" value="1"/>
</dbReference>
<dbReference type="SUPFAM" id="SSF55811">
    <property type="entry name" value="Nudix"/>
    <property type="match status" value="1"/>
</dbReference>
<reference key="1">
    <citation type="journal article" date="2004" name="Nat. Genet.">
        <title>Complete sequencing and characterization of 21,243 full-length human cDNAs.</title>
        <authorList>
            <person name="Ota T."/>
            <person name="Suzuki Y."/>
            <person name="Nishikawa T."/>
            <person name="Otsuki T."/>
            <person name="Sugiyama T."/>
            <person name="Irie R."/>
            <person name="Wakamatsu A."/>
            <person name="Hayashi K."/>
            <person name="Sato H."/>
            <person name="Nagai K."/>
            <person name="Kimura K."/>
            <person name="Makita H."/>
            <person name="Sekine M."/>
            <person name="Obayashi M."/>
            <person name="Nishi T."/>
            <person name="Shibahara T."/>
            <person name="Tanaka T."/>
            <person name="Ishii S."/>
            <person name="Yamamoto J."/>
            <person name="Saito K."/>
            <person name="Kawai Y."/>
            <person name="Isono Y."/>
            <person name="Nakamura Y."/>
            <person name="Nagahari K."/>
            <person name="Murakami K."/>
            <person name="Yasuda T."/>
            <person name="Iwayanagi T."/>
            <person name="Wagatsuma M."/>
            <person name="Shiratori A."/>
            <person name="Sudo H."/>
            <person name="Hosoiri T."/>
            <person name="Kaku Y."/>
            <person name="Kodaira H."/>
            <person name="Kondo H."/>
            <person name="Sugawara M."/>
            <person name="Takahashi M."/>
            <person name="Kanda K."/>
            <person name="Yokoi T."/>
            <person name="Furuya T."/>
            <person name="Kikkawa E."/>
            <person name="Omura Y."/>
            <person name="Abe K."/>
            <person name="Kamihara K."/>
            <person name="Katsuta N."/>
            <person name="Sato K."/>
            <person name="Tanikawa M."/>
            <person name="Yamazaki M."/>
            <person name="Ninomiya K."/>
            <person name="Ishibashi T."/>
            <person name="Yamashita H."/>
            <person name="Murakawa K."/>
            <person name="Fujimori K."/>
            <person name="Tanai H."/>
            <person name="Kimata M."/>
            <person name="Watanabe M."/>
            <person name="Hiraoka S."/>
            <person name="Chiba Y."/>
            <person name="Ishida S."/>
            <person name="Ono Y."/>
            <person name="Takiguchi S."/>
            <person name="Watanabe S."/>
            <person name="Yosida M."/>
            <person name="Hotuta T."/>
            <person name="Kusano J."/>
            <person name="Kanehori K."/>
            <person name="Takahashi-Fujii A."/>
            <person name="Hara H."/>
            <person name="Tanase T.-O."/>
            <person name="Nomura Y."/>
            <person name="Togiya S."/>
            <person name="Komai F."/>
            <person name="Hara R."/>
            <person name="Takeuchi K."/>
            <person name="Arita M."/>
            <person name="Imose N."/>
            <person name="Musashino K."/>
            <person name="Yuuki H."/>
            <person name="Oshima A."/>
            <person name="Sasaki N."/>
            <person name="Aotsuka S."/>
            <person name="Yoshikawa Y."/>
            <person name="Matsunawa H."/>
            <person name="Ichihara T."/>
            <person name="Shiohata N."/>
            <person name="Sano S."/>
            <person name="Moriya S."/>
            <person name="Momiyama H."/>
            <person name="Satoh N."/>
            <person name="Takami S."/>
            <person name="Terashima Y."/>
            <person name="Suzuki O."/>
            <person name="Nakagawa S."/>
            <person name="Senoh A."/>
            <person name="Mizoguchi H."/>
            <person name="Goto Y."/>
            <person name="Shimizu F."/>
            <person name="Wakebe H."/>
            <person name="Hishigaki H."/>
            <person name="Watanabe T."/>
            <person name="Sugiyama A."/>
            <person name="Takemoto M."/>
            <person name="Kawakami B."/>
            <person name="Yamazaki M."/>
            <person name="Watanabe K."/>
            <person name="Kumagai A."/>
            <person name="Itakura S."/>
            <person name="Fukuzumi Y."/>
            <person name="Fujimori Y."/>
            <person name="Komiyama M."/>
            <person name="Tashiro H."/>
            <person name="Tanigami A."/>
            <person name="Fujiwara T."/>
            <person name="Ono T."/>
            <person name="Yamada K."/>
            <person name="Fujii Y."/>
            <person name="Ozaki K."/>
            <person name="Hirao M."/>
            <person name="Ohmori Y."/>
            <person name="Kawabata A."/>
            <person name="Hikiji T."/>
            <person name="Kobatake N."/>
            <person name="Inagaki H."/>
            <person name="Ikema Y."/>
            <person name="Okamoto S."/>
            <person name="Okitani R."/>
            <person name="Kawakami T."/>
            <person name="Noguchi S."/>
            <person name="Itoh T."/>
            <person name="Shigeta K."/>
            <person name="Senba T."/>
            <person name="Matsumura K."/>
            <person name="Nakajima Y."/>
            <person name="Mizuno T."/>
            <person name="Morinaga M."/>
            <person name="Sasaki M."/>
            <person name="Togashi T."/>
            <person name="Oyama M."/>
            <person name="Hata H."/>
            <person name="Watanabe M."/>
            <person name="Komatsu T."/>
            <person name="Mizushima-Sugano J."/>
            <person name="Satoh T."/>
            <person name="Shirai Y."/>
            <person name="Takahashi Y."/>
            <person name="Nakagawa K."/>
            <person name="Okumura K."/>
            <person name="Nagase T."/>
            <person name="Nomura N."/>
            <person name="Kikuchi H."/>
            <person name="Masuho Y."/>
            <person name="Yamashita R."/>
            <person name="Nakai K."/>
            <person name="Yada T."/>
            <person name="Nakamura Y."/>
            <person name="Ohara O."/>
            <person name="Isogai T."/>
            <person name="Sugano S."/>
        </authorList>
    </citation>
    <scope>NUCLEOTIDE SEQUENCE [LARGE SCALE MRNA] (ISOFORM 2)</scope>
    <source>
        <tissue>Prostate</tissue>
    </source>
</reference>
<reference key="2">
    <citation type="journal article" date="2004" name="Genome Res.">
        <title>The status, quality, and expansion of the NIH full-length cDNA project: the Mammalian Gene Collection (MGC).</title>
        <authorList>
            <consortium name="The MGC Project Team"/>
        </authorList>
    </citation>
    <scope>NUCLEOTIDE SEQUENCE [LARGE SCALE MRNA] (ISOFORM 1)</scope>
    <source>
        <tissue>Lung</tissue>
    </source>
</reference>
<reference key="3">
    <citation type="journal article" date="2008" name="Nucleic Acids Res.">
        <title>Evolutionary conservation supports ancient origin for Nudt16, a nuclear-localized, RNA-binding, RNA-decapping enzyme.</title>
        <authorList>
            <person name="Taylor M.J."/>
            <person name="Peculis B.A."/>
        </authorList>
    </citation>
    <scope>RNA-BINDING</scope>
    <scope>GENE EVOLUTION</scope>
    <scope>GENE FAMILY ORGANIZATION</scope>
</reference>
<reference key="4">
    <citation type="journal article" date="2010" name="Mol. Cell">
        <title>Multiple mRNA decapping enzymes in mammalian cells.</title>
        <authorList>
            <person name="Song M.G."/>
            <person name="Li Y."/>
            <person name="Kiledjian M."/>
        </authorList>
    </citation>
    <scope>LACK OF FUNCTION AS A DECAPPING ENZYME</scope>
</reference>
<reference key="5">
    <citation type="journal article" date="2011" name="BMC Syst. Biol.">
        <title>Initial characterization of the human central proteome.</title>
        <authorList>
            <person name="Burkard T.R."/>
            <person name="Planyavsky M."/>
            <person name="Kaupe I."/>
            <person name="Breitwieser F.P."/>
            <person name="Buerckstuemmer T."/>
            <person name="Bennett K.L."/>
            <person name="Superti-Furga G."/>
            <person name="Colinge J."/>
        </authorList>
    </citation>
    <scope>IDENTIFICATION BY MASS SPECTROMETRY [LARGE SCALE ANALYSIS]</scope>
</reference>
<reference key="6">
    <citation type="journal article" date="2017" name="Nature">
        <title>TIRR regulates 53BP1 by masking its histone methyl-lysine binding function.</title>
        <authorList>
            <person name="Drane P."/>
            <person name="Brault M.E."/>
            <person name="Cui G."/>
            <person name="Meghani K."/>
            <person name="Chaubey S."/>
            <person name="Detappe A."/>
            <person name="Parnandi N."/>
            <person name="He Y."/>
            <person name="Zheng X.F."/>
            <person name="Botuyan M.V."/>
            <person name="Kalousi A."/>
            <person name="Yewdell W.T."/>
            <person name="Muench C."/>
            <person name="Harper J.W."/>
            <person name="Chaudhuri J."/>
            <person name="Soutoglou E."/>
            <person name="Mer G."/>
            <person name="Chowdhury D."/>
        </authorList>
    </citation>
    <scope>FUNCTION</scope>
    <scope>SUBCELLULAR LOCATION</scope>
    <scope>SUBUNIT</scope>
    <scope>INTERACTION WITH TP53BP1</scope>
    <scope>UBIQUITINATION AT LYS-10 AND LYS-151</scope>
    <scope>MUTAGENESIS OF LYS-10 AND LYS-151</scope>
</reference>
<reference evidence="10" key="7">
    <citation type="submission" date="2009-11" db="PDB data bank">
        <title>Crystal structure of human protein syndesmos (NUDT16L1).</title>
        <authorList>
            <person name="Tresaugues L."/>
            <person name="Siponen M.I."/>
            <person name="Arrowsmith C.H."/>
            <person name="Berglund H."/>
            <person name="Bountra C."/>
            <person name="Collins R."/>
            <person name="Edwards A.M."/>
            <person name="Flodin S."/>
            <person name="Flores A."/>
            <person name="Graslund S."/>
            <person name="Hammarstrom M."/>
            <person name="Johansson A."/>
            <person name="Johansson I."/>
            <person name="Kallas A."/>
            <person name="Karlberg T."/>
            <person name="Kotenyova T."/>
            <person name="Kotzsch A."/>
            <person name="Kraulis P."/>
            <person name="Moche M."/>
            <person name="Nielsen T.K."/>
            <person name="Nyman T."/>
            <person name="Persson C."/>
            <person name="Roos A.K."/>
            <person name="Schuler H."/>
            <person name="Schutz P."/>
            <person name="Thorsell A.G."/>
            <person name="Van Den Berg S."/>
            <person name="Weigelt J."/>
            <person name="Welin M."/>
            <person name="Wisniewska M."/>
            <person name="Nordlund P."/>
        </authorList>
    </citation>
    <scope>X-RAY CRYSTALLOGRAPHY (1.70 ANGSTROMS) OF 6-211</scope>
</reference>
<comment type="function">
    <text evidence="2 4">Key regulator of TP53BP1 required to stabilize TP53BP1 and regulate its recruitment to chromatin (PubMed:28241136). In absence of DNA damage, interacts with the tandem Tudor-like domain of TP53BP1, masking the region that binds histone H4 dimethylated at 'Lys-20' (H4K20me2), thereby preventing TP53BP1 recruitment to chromatin and maintaining TP53BP1 localization to the nucleus (PubMed:28241136). Following DNA damage, ATM-induced phosphorylation of TP53BP1 and subsequent recruitment of RIF1 leads to dissociate NUDT16L1/TIRR from TP53BP1, unmasking the tandem Tudor-like domain and allowing recruitment of TP53BP1 to DNA double strand breaks (DSBs) (PubMed:28241136). Binds U8 snoRNA (PubMed:18820299).</text>
</comment>
<comment type="subunit">
    <text evidence="1 4">Homodimer (PubMed:28241136). Interacts with TP53BP1 (via the Tudor-like domain); interaction is abolished following DNA damage and TP53BP1 phosphorylation by ATM (PubMed:28241136). Interacts (via the cytoplasmic part) with SDC4 (By similarity). Interacts with TGFB1I1 and PXN (By similarity).</text>
</comment>
<comment type="interaction">
    <interactant intactId="EBI-2949792">
        <id>Q9BRJ7</id>
    </interactant>
    <interactant intactId="EBI-12011224">
        <id>Q9NPB3</id>
        <label>CABP2</label>
    </interactant>
    <organismsDiffer>false</organismsDiffer>
    <experiments>3</experiments>
</comment>
<comment type="interaction">
    <interactant intactId="EBI-2949792">
        <id>Q9BRJ7</id>
    </interactant>
    <interactant intactId="EBI-352986">
        <id>P52597</id>
        <label>HNRNPF</label>
    </interactant>
    <organismsDiffer>false</organismsDiffer>
    <experiments>3</experiments>
</comment>
<comment type="interaction">
    <interactant intactId="EBI-2949792">
        <id>Q9BRJ7</id>
    </interactant>
    <interactant intactId="EBI-351590">
        <id>P31943</id>
        <label>HNRNPH1</label>
    </interactant>
    <organismsDiffer>false</organismsDiffer>
    <experiments>4</experiments>
</comment>
<comment type="interaction">
    <interactant intactId="EBI-2949792">
        <id>Q9BRJ7</id>
    </interactant>
    <interactant intactId="EBI-747204">
        <id>Q9UKT9</id>
        <label>IKZF3</label>
    </interactant>
    <organismsDiffer>false</organismsDiffer>
    <experiments>3</experiments>
</comment>
<comment type="interaction">
    <interactant intactId="EBI-2949792">
        <id>Q9BRJ7</id>
    </interactant>
    <interactant intactId="EBI-6509505">
        <id>Q0VD86</id>
        <label>INCA1</label>
    </interactant>
    <organismsDiffer>false</organismsDiffer>
    <experiments>3</experiments>
</comment>
<comment type="interaction">
    <interactant intactId="EBI-2949792">
        <id>Q9BRJ7</id>
    </interactant>
    <interactant intactId="EBI-948001">
        <id>Q15323</id>
        <label>KRT31</label>
    </interactant>
    <organismsDiffer>false</organismsDiffer>
    <experiments>3</experiments>
</comment>
<comment type="interaction">
    <interactant intactId="EBI-2949792">
        <id>Q9BRJ7</id>
    </interactant>
    <interactant intactId="EBI-11098807">
        <id>Q9H7H0-2</id>
        <label>METTL17</label>
    </interactant>
    <organismsDiffer>false</organismsDiffer>
    <experiments>3</experiments>
</comment>
<comment type="interaction">
    <interactant intactId="EBI-2949792">
        <id>Q9BRJ7</id>
    </interactant>
    <interactant intactId="EBI-11750983">
        <id>Q9HC98-4</id>
        <label>NEK6</label>
    </interactant>
    <organismsDiffer>false</organismsDiffer>
    <experiments>3</experiments>
</comment>
<comment type="interaction">
    <interactant intactId="EBI-2949792">
        <id>Q9BRJ7</id>
    </interactant>
    <interactant intactId="EBI-741158">
        <id>Q96HA8</id>
        <label>NTAQ1</label>
    </interactant>
    <organismsDiffer>false</organismsDiffer>
    <experiments>3</experiments>
</comment>
<comment type="interaction">
    <interactant intactId="EBI-2949792">
        <id>Q9BRJ7</id>
    </interactant>
    <interactant intactId="EBI-7444396">
        <id>Q9Y2I2</id>
        <label>NTNG1</label>
    </interactant>
    <organismsDiffer>false</organismsDiffer>
    <experiments>2</experiments>
</comment>
<comment type="interaction">
    <interactant intactId="EBI-2949792">
        <id>Q9BRJ7</id>
    </interactant>
    <interactant intactId="EBI-302345">
        <id>Q8ND90</id>
        <label>PNMA1</label>
    </interactant>
    <organismsDiffer>false</organismsDiffer>
    <experiments>3</experiments>
</comment>
<comment type="interaction">
    <interactant intactId="EBI-2949792">
        <id>Q9BRJ7</id>
    </interactant>
    <interactant intactId="EBI-10253121">
        <id>Q6P9E2</id>
        <label>RECK</label>
    </interactant>
    <organismsDiffer>false</organismsDiffer>
    <experiments>3</experiments>
</comment>
<comment type="interaction">
    <interactant intactId="EBI-2949792">
        <id>Q9BRJ7</id>
    </interactant>
    <interactant intactId="EBI-358489">
        <id>Q96GM5</id>
        <label>SMARCD1</label>
    </interactant>
    <organismsDiffer>false</organismsDiffer>
    <experiments>3</experiments>
</comment>
<comment type="interaction">
    <interactant intactId="EBI-2949792">
        <id>Q9BRJ7</id>
    </interactant>
    <interactant intactId="EBI-355744">
        <id>Q12933</id>
        <label>TRAF2</label>
    </interactant>
    <organismsDiffer>false</organismsDiffer>
    <experiments>6</experiments>
</comment>
<comment type="interaction">
    <interactant intactId="EBI-2949792">
        <id>Q9BRJ7</id>
    </interactant>
    <interactant intactId="EBI-3650647">
        <id>Q9BUZ4</id>
        <label>TRAF4</label>
    </interactant>
    <organismsDiffer>false</organismsDiffer>
    <experiments>3</experiments>
</comment>
<comment type="interaction">
    <interactant intactId="EBI-2949792">
        <id>Q9BRJ7</id>
    </interactant>
    <interactant intactId="EBI-2130449">
        <id>Q6AZZ1</id>
        <label>TRIM68</label>
    </interactant>
    <organismsDiffer>false</organismsDiffer>
    <experiments>3</experiments>
</comment>
<comment type="interaction">
    <interactant intactId="EBI-2949792">
        <id>Q9BRJ7</id>
    </interactant>
    <interactant intactId="EBI-527853">
        <id>Q9UGI0</id>
        <label>ZRANB1</label>
    </interactant>
    <organismsDiffer>false</organismsDiffer>
    <experiments>3</experiments>
</comment>
<comment type="subcellular location">
    <subcellularLocation>
        <location evidence="4">Nucleus</location>
    </subcellularLocation>
</comment>
<comment type="alternative products">
    <event type="alternative splicing"/>
    <isoform>
        <id>Q9BRJ7-1</id>
        <name>1</name>
        <sequence type="displayed"/>
    </isoform>
    <isoform>
        <id>Q9BRJ7-2</id>
        <name>2</name>
        <sequence type="described" ref="VSP_014276"/>
    </isoform>
</comment>
<comment type="similarity">
    <text evidence="8">Belongs to the Nudix hydrolase family. TIRR subfamily.</text>
</comment>
<comment type="caution">
    <text evidence="2 3">Although strongly related to the nudix NUDT16 protein, lacks the Nudix box and is therefore not related to the rest of the family (PubMed:18820299, PubMed:21070968). Gene organization and evolutionary distribution suggest that syndesmos NUDT16L1 probably originated as a gene duplication event of the more ancient U8 snoRNA-decapping enzyme NUDT16 (PubMed:18820299). Although similar to U8 snoRNA-decapping enzyme NUDT16, lacks a number of residues which are necessary for hydrolase activity and does not play a role in U8 snoRNA decapping activity (PubMed:21070968).</text>
</comment>
<keyword id="KW-0002">3D-structure</keyword>
<keyword id="KW-0025">Alternative splicing</keyword>
<keyword id="KW-1017">Isopeptide bond</keyword>
<keyword id="KW-0539">Nucleus</keyword>
<keyword id="KW-1267">Proteomics identification</keyword>
<keyword id="KW-1185">Reference proteome</keyword>
<keyword id="KW-0694">RNA-binding</keyword>
<keyword id="KW-0832">Ubl conjugation</keyword>
<evidence type="ECO:0000250" key="1">
    <source>
        <dbReference type="UniProtKB" id="Q8VHN8"/>
    </source>
</evidence>
<evidence type="ECO:0000269" key="2">
    <source>
    </source>
</evidence>
<evidence type="ECO:0000269" key="3">
    <source>
    </source>
</evidence>
<evidence type="ECO:0000269" key="4">
    <source>
    </source>
</evidence>
<evidence type="ECO:0000303" key="5">
    <source>
    </source>
</evidence>
<evidence type="ECO:0000303" key="6">
    <source>
    </source>
</evidence>
<evidence type="ECO:0000303" key="7">
    <source>
    </source>
</evidence>
<evidence type="ECO:0000305" key="8"/>
<evidence type="ECO:0000312" key="9">
    <source>
        <dbReference type="HGNC" id="HGNC:28154"/>
    </source>
</evidence>
<evidence type="ECO:0007744" key="10">
    <source>
        <dbReference type="PDB" id="3KVH"/>
    </source>
</evidence>
<evidence type="ECO:0007829" key="11">
    <source>
        <dbReference type="PDB" id="3KVH"/>
    </source>
</evidence>
<evidence type="ECO:0007829" key="12">
    <source>
        <dbReference type="PDB" id="5ZCJ"/>
    </source>
</evidence>
<evidence type="ECO:0007829" key="13">
    <source>
        <dbReference type="PDB" id="6D0L"/>
    </source>
</evidence>
<evidence type="ECO:0007829" key="14">
    <source>
        <dbReference type="PDB" id="8U3S"/>
    </source>
</evidence>
<organism>
    <name type="scientific">Homo sapiens</name>
    <name type="common">Human</name>
    <dbReference type="NCBI Taxonomy" id="9606"/>
    <lineage>
        <taxon>Eukaryota</taxon>
        <taxon>Metazoa</taxon>
        <taxon>Chordata</taxon>
        <taxon>Craniata</taxon>
        <taxon>Vertebrata</taxon>
        <taxon>Euteleostomi</taxon>
        <taxon>Mammalia</taxon>
        <taxon>Eutheria</taxon>
        <taxon>Euarchontoglires</taxon>
        <taxon>Primates</taxon>
        <taxon>Haplorrhini</taxon>
        <taxon>Catarrhini</taxon>
        <taxon>Hominidae</taxon>
        <taxon>Homo</taxon>
    </lineage>
</organism>
<protein>
    <recommendedName>
        <fullName evidence="7">Tudor-interacting repair regulator protein</fullName>
    </recommendedName>
    <alternativeName>
        <fullName evidence="9">NUDT16-like protein 1</fullName>
    </alternativeName>
    <alternativeName>
        <fullName evidence="6">Protein syndesmos</fullName>
    </alternativeName>
</protein>
<feature type="chain" id="PRO_0000097648" description="Tudor-interacting repair regulator protein">
    <location>
        <begin position="1"/>
        <end position="211"/>
    </location>
</feature>
<feature type="region of interest" description="Interaction with PXN" evidence="1">
    <location>
        <begin position="118"/>
        <end position="205"/>
    </location>
</feature>
<feature type="site" description="Required for interaction with TP53BP1" evidence="4">
    <location>
        <position position="10"/>
    </location>
</feature>
<feature type="cross-link" description="Glycyl lysine isopeptide (Lys-Gly) (interchain with G-Cter in ubiquitin)" evidence="4">
    <location>
        <position position="10"/>
    </location>
</feature>
<feature type="cross-link" description="Glycyl lysine isopeptide (Lys-Gly) (interchain with G-Cter in ubiquitin)" evidence="4">
    <location>
        <position position="151"/>
    </location>
</feature>
<feature type="splice variant" id="VSP_014276" description="In isoform 2." evidence="5">
    <original>LGLVRVPLYTQKDRVGGFPNFLSNAFVSTAKCQLLFALKVLNMMPEEKLVEALAAATEKQKKALEKLLPASS</original>
    <variation>GPPPGPRPPPRGLALAPWKAPMGNTSPEGPLAGLGRVSLSPAMGWGEGSGAGRPGKEGRGWGPALGLPQGCVTSALLPAIANPGSGGVGSVGRKGWGRSGDCLGSWET</variation>
    <location>
        <begin position="140"/>
        <end position="211"/>
    </location>
</feature>
<feature type="mutagenesis site" description="Abolishes interaction with TP53BP1." evidence="4">
    <original>K</original>
    <variation>E</variation>
    <location>
        <position position="10"/>
    </location>
</feature>
<feature type="mutagenesis site" description="Still able to interact with TP53BP1." evidence="4">
    <original>K</original>
    <variation>E</variation>
    <location>
        <position position="151"/>
    </location>
</feature>
<feature type="strand" evidence="13">
    <location>
        <begin position="10"/>
        <end position="12"/>
    </location>
</feature>
<feature type="helix" evidence="11">
    <location>
        <begin position="14"/>
        <end position="17"/>
    </location>
</feature>
<feature type="strand" evidence="11">
    <location>
        <begin position="25"/>
        <end position="40"/>
    </location>
</feature>
<feature type="turn" evidence="11">
    <location>
        <begin position="41"/>
        <end position="43"/>
    </location>
</feature>
<feature type="strand" evidence="11">
    <location>
        <begin position="44"/>
        <end position="55"/>
    </location>
</feature>
<feature type="strand" evidence="11">
    <location>
        <begin position="63"/>
        <end position="67"/>
    </location>
</feature>
<feature type="turn" evidence="11">
    <location>
        <begin position="69"/>
        <end position="71"/>
    </location>
</feature>
<feature type="helix" evidence="11">
    <location>
        <begin position="74"/>
        <end position="80"/>
    </location>
</feature>
<feature type="helix" evidence="11">
    <location>
        <begin position="93"/>
        <end position="95"/>
    </location>
</feature>
<feature type="strand" evidence="11">
    <location>
        <begin position="96"/>
        <end position="101"/>
    </location>
</feature>
<feature type="strand" evidence="12">
    <location>
        <begin position="103"/>
        <end position="106"/>
    </location>
</feature>
<feature type="strand" evidence="11">
    <location>
        <begin position="108"/>
        <end position="116"/>
    </location>
</feature>
<feature type="helix" evidence="11">
    <location>
        <begin position="119"/>
        <end position="130"/>
    </location>
</feature>
<feature type="strand" evidence="14">
    <location>
        <begin position="132"/>
        <end position="135"/>
    </location>
</feature>
<feature type="turn" evidence="11">
    <location>
        <begin position="136"/>
        <end position="138"/>
    </location>
</feature>
<feature type="strand" evidence="11">
    <location>
        <begin position="139"/>
        <end position="145"/>
    </location>
</feature>
<feature type="helix" evidence="11">
    <location>
        <begin position="157"/>
        <end position="161"/>
    </location>
</feature>
<feature type="helix" evidence="11">
    <location>
        <begin position="169"/>
        <end position="179"/>
    </location>
</feature>
<feature type="helix" evidence="11">
    <location>
        <begin position="185"/>
        <end position="206"/>
    </location>
</feature>
<accession>Q9BRJ7</accession>
<accession>Q8NAI2</accession>
<sequence>MSTAAVPELKQISRVEAMRLGPGWSHSCHAMLYAANPGQLFGRIPMRFSVLMQMRFDGLLGFPGGFVDRRFWSLEDGLNRVLGLGLGCLRLTEADYLSSHLTEGPHRVVAHLYARQLTLEQLHAVEISAVHSRDHGLEVLGLVRVPLYTQKDRVGGFPNFLSNAFVSTAKCQLLFALKVLNMMPEEKLVEALAAATEKQKKALEKLLPASS</sequence>
<name>TIRR_HUMAN</name>